<gene>
    <name type="primary">fbxo9</name>
    <name type="ORF">si:ch211-71k24.1</name>
</gene>
<reference key="1">
    <citation type="submission" date="2003-12" db="EMBL/GenBank/DDBJ databases">
        <authorList>
            <consortium name="NIH - Zebrafish Gene Collection (ZGC) project"/>
        </authorList>
    </citation>
    <scope>NUCLEOTIDE SEQUENCE [LARGE SCALE MRNA]</scope>
</reference>
<reference key="2">
    <citation type="journal article" date="2013" name="Nature">
        <title>The zebrafish reference genome sequence and its relationship to the human genome.</title>
        <authorList>
            <person name="Howe K."/>
            <person name="Clark M.D."/>
            <person name="Torroja C.F."/>
            <person name="Torrance J."/>
            <person name="Berthelot C."/>
            <person name="Muffato M."/>
            <person name="Collins J.E."/>
            <person name="Humphray S."/>
            <person name="McLaren K."/>
            <person name="Matthews L."/>
            <person name="McLaren S."/>
            <person name="Sealy I."/>
            <person name="Caccamo M."/>
            <person name="Churcher C."/>
            <person name="Scott C."/>
            <person name="Barrett J.C."/>
            <person name="Koch R."/>
            <person name="Rauch G.J."/>
            <person name="White S."/>
            <person name="Chow W."/>
            <person name="Kilian B."/>
            <person name="Quintais L.T."/>
            <person name="Guerra-Assuncao J.A."/>
            <person name="Zhou Y."/>
            <person name="Gu Y."/>
            <person name="Yen J."/>
            <person name="Vogel J.H."/>
            <person name="Eyre T."/>
            <person name="Redmond S."/>
            <person name="Banerjee R."/>
            <person name="Chi J."/>
            <person name="Fu B."/>
            <person name="Langley E."/>
            <person name="Maguire S.F."/>
            <person name="Laird G.K."/>
            <person name="Lloyd D."/>
            <person name="Kenyon E."/>
            <person name="Donaldson S."/>
            <person name="Sehra H."/>
            <person name="Almeida-King J."/>
            <person name="Loveland J."/>
            <person name="Trevanion S."/>
            <person name="Jones M."/>
            <person name="Quail M."/>
            <person name="Willey D."/>
            <person name="Hunt A."/>
            <person name="Burton J."/>
            <person name="Sims S."/>
            <person name="McLay K."/>
            <person name="Plumb B."/>
            <person name="Davis J."/>
            <person name="Clee C."/>
            <person name="Oliver K."/>
            <person name="Clark R."/>
            <person name="Riddle C."/>
            <person name="Elliot D."/>
            <person name="Threadgold G."/>
            <person name="Harden G."/>
            <person name="Ware D."/>
            <person name="Begum S."/>
            <person name="Mortimore B."/>
            <person name="Kerry G."/>
            <person name="Heath P."/>
            <person name="Phillimore B."/>
            <person name="Tracey A."/>
            <person name="Corby N."/>
            <person name="Dunn M."/>
            <person name="Johnson C."/>
            <person name="Wood J."/>
            <person name="Clark S."/>
            <person name="Pelan S."/>
            <person name="Griffiths G."/>
            <person name="Smith M."/>
            <person name="Glithero R."/>
            <person name="Howden P."/>
            <person name="Barker N."/>
            <person name="Lloyd C."/>
            <person name="Stevens C."/>
            <person name="Harley J."/>
            <person name="Holt K."/>
            <person name="Panagiotidis G."/>
            <person name="Lovell J."/>
            <person name="Beasley H."/>
            <person name="Henderson C."/>
            <person name="Gordon D."/>
            <person name="Auger K."/>
            <person name="Wright D."/>
            <person name="Collins J."/>
            <person name="Raisen C."/>
            <person name="Dyer L."/>
            <person name="Leung K."/>
            <person name="Robertson L."/>
            <person name="Ambridge K."/>
            <person name="Leongamornlert D."/>
            <person name="McGuire S."/>
            <person name="Gilderthorp R."/>
            <person name="Griffiths C."/>
            <person name="Manthravadi D."/>
            <person name="Nichol S."/>
            <person name="Barker G."/>
            <person name="Whitehead S."/>
            <person name="Kay M."/>
            <person name="Brown J."/>
            <person name="Murnane C."/>
            <person name="Gray E."/>
            <person name="Humphries M."/>
            <person name="Sycamore N."/>
            <person name="Barker D."/>
            <person name="Saunders D."/>
            <person name="Wallis J."/>
            <person name="Babbage A."/>
            <person name="Hammond S."/>
            <person name="Mashreghi-Mohammadi M."/>
            <person name="Barr L."/>
            <person name="Martin S."/>
            <person name="Wray P."/>
            <person name="Ellington A."/>
            <person name="Matthews N."/>
            <person name="Ellwood M."/>
            <person name="Woodmansey R."/>
            <person name="Clark G."/>
            <person name="Cooper J."/>
            <person name="Tromans A."/>
            <person name="Grafham D."/>
            <person name="Skuce C."/>
            <person name="Pandian R."/>
            <person name="Andrews R."/>
            <person name="Harrison E."/>
            <person name="Kimberley A."/>
            <person name="Garnett J."/>
            <person name="Fosker N."/>
            <person name="Hall R."/>
            <person name="Garner P."/>
            <person name="Kelly D."/>
            <person name="Bird C."/>
            <person name="Palmer S."/>
            <person name="Gehring I."/>
            <person name="Berger A."/>
            <person name="Dooley C.M."/>
            <person name="Ersan-Urun Z."/>
            <person name="Eser C."/>
            <person name="Geiger H."/>
            <person name="Geisler M."/>
            <person name="Karotki L."/>
            <person name="Kirn A."/>
            <person name="Konantz J."/>
            <person name="Konantz M."/>
            <person name="Oberlander M."/>
            <person name="Rudolph-Geiger S."/>
            <person name="Teucke M."/>
            <person name="Lanz C."/>
            <person name="Raddatz G."/>
            <person name="Osoegawa K."/>
            <person name="Zhu B."/>
            <person name="Rapp A."/>
            <person name="Widaa S."/>
            <person name="Langford C."/>
            <person name="Yang F."/>
            <person name="Schuster S.C."/>
            <person name="Carter N.P."/>
            <person name="Harrow J."/>
            <person name="Ning Z."/>
            <person name="Herrero J."/>
            <person name="Searle S.M."/>
            <person name="Enright A."/>
            <person name="Geisler R."/>
            <person name="Plasterk R.H."/>
            <person name="Lee C."/>
            <person name="Westerfield M."/>
            <person name="de Jong P.J."/>
            <person name="Zon L.I."/>
            <person name="Postlethwait J.H."/>
            <person name="Nusslein-Volhard C."/>
            <person name="Hubbard T.J."/>
            <person name="Roest Crollius H."/>
            <person name="Rogers J."/>
            <person name="Stemple D.L."/>
        </authorList>
    </citation>
    <scope>NUCLEOTIDE SEQUENCE [LARGE SCALE GENOMIC DNA]</scope>
    <source>
        <strain>Tuebingen</strain>
    </source>
</reference>
<feature type="chain" id="PRO_0000421761" description="F-box only protein 9">
    <location>
        <begin position="1"/>
        <end position="421"/>
    </location>
</feature>
<feature type="repeat" description="TPR">
    <location>
        <begin position="68"/>
        <end position="101"/>
    </location>
</feature>
<feature type="domain" description="F-box" evidence="2">
    <location>
        <begin position="158"/>
        <end position="209"/>
    </location>
</feature>
<feature type="region of interest" description="Disordered" evidence="3">
    <location>
        <begin position="1"/>
        <end position="63"/>
    </location>
</feature>
<feature type="compositionally biased region" description="Acidic residues" evidence="3">
    <location>
        <begin position="11"/>
        <end position="20"/>
    </location>
</feature>
<feature type="compositionally biased region" description="Polar residues" evidence="3">
    <location>
        <begin position="40"/>
        <end position="52"/>
    </location>
</feature>
<feature type="compositionally biased region" description="Basic and acidic residues" evidence="3">
    <location>
        <begin position="54"/>
        <end position="63"/>
    </location>
</feature>
<feature type="sequence conflict" description="In Ref. 2; AAH76528." evidence="4" ref="2">
    <original>E</original>
    <variation>G</variation>
    <location>
        <position position="16"/>
    </location>
</feature>
<name>FBX9_DANRE</name>
<accession>Q6P3K3</accession>
<accession>Q6DG26</accession>
<comment type="function">
    <text evidence="1">Substrate recognition component of a SCF (SKP1-CUL1-F-box protein) E3 ubiquitin-protein ligase complex which mediates the ubiquitination and subsequent proteasomal degradation of target proteins and acts as a regulator of mTOR signaling.</text>
</comment>
<comment type="pathway">
    <text>Protein modification; protein ubiquitination.</text>
</comment>
<comment type="subunit">
    <text evidence="1">Part of the SCF (SKP1-CUL1-F-box) E3 ubiquitin-protein ligase complex SCF(fbxo9).</text>
</comment>
<comment type="subcellular location">
    <subcellularLocation>
        <location evidence="1">Cytoplasm</location>
    </subcellularLocation>
</comment>
<proteinExistence type="evidence at transcript level"/>
<organism>
    <name type="scientific">Danio rerio</name>
    <name type="common">Zebrafish</name>
    <name type="synonym">Brachydanio rerio</name>
    <dbReference type="NCBI Taxonomy" id="7955"/>
    <lineage>
        <taxon>Eukaryota</taxon>
        <taxon>Metazoa</taxon>
        <taxon>Chordata</taxon>
        <taxon>Craniata</taxon>
        <taxon>Vertebrata</taxon>
        <taxon>Euteleostomi</taxon>
        <taxon>Actinopterygii</taxon>
        <taxon>Neopterygii</taxon>
        <taxon>Teleostei</taxon>
        <taxon>Ostariophysi</taxon>
        <taxon>Cypriniformes</taxon>
        <taxon>Danionidae</taxon>
        <taxon>Danioninae</taxon>
        <taxon>Danio</taxon>
    </lineage>
</organism>
<sequence>MAESNQNTDGAVEEGEDENTGDSNLQMELSAFRAKWMSELQPSSGGQRSFSRNAELRRRQETAKEEKARELFLKAVEEEQNGAVYEAIKYYKSAMQLVPDIEFKINYSRTPDPERGGSYLESSENNREIDDLLTYFQHQLTLGNDAMKLCEHETETSQVHISALPFEVLMYIFRWVVSCDLDLRALEQLSLVCRGFYICARDPEIWRSACLRVWGRSCTKMLPYSSWREMFLERPRVRFDGVYISKTSYIRQGEESLDGFYRAWHQVEYYRYLRFFPDGQVMMLTTPEDPLVTVPRLRSKNSRMDSIMFGHYRLSQDTDNQTKVYVVVSKRKEEKVSEYQRSRFCRRNPVPEAERSFHVGLQLSSGGRQRFNKLVWIHHSCHITYRSTGETVVTAFDVDKMYTPLFFARVKSYTAFSERPL</sequence>
<protein>
    <recommendedName>
        <fullName>F-box only protein 9</fullName>
    </recommendedName>
</protein>
<dbReference type="EMBL" id="CR376766">
    <property type="protein sequence ID" value="CAX14513.1"/>
    <property type="molecule type" value="Genomic_DNA"/>
</dbReference>
<dbReference type="EMBL" id="BC063957">
    <property type="protein sequence ID" value="AAH63957.1"/>
    <property type="molecule type" value="mRNA"/>
</dbReference>
<dbReference type="EMBL" id="BC076528">
    <property type="protein sequence ID" value="AAH76528.1"/>
    <property type="molecule type" value="mRNA"/>
</dbReference>
<dbReference type="RefSeq" id="NP_956012.1">
    <property type="nucleotide sequence ID" value="NM_199718.2"/>
</dbReference>
<dbReference type="SMR" id="Q6P3K3"/>
<dbReference type="FunCoup" id="Q6P3K3">
    <property type="interactions" value="763"/>
</dbReference>
<dbReference type="STRING" id="7955.ENSDARP00000093542"/>
<dbReference type="PaxDb" id="7955-ENSDARP00000093542"/>
<dbReference type="DNASU" id="325469"/>
<dbReference type="Ensembl" id="ENSDART00000102767">
    <property type="protein sequence ID" value="ENSDARP00000093542"/>
    <property type="gene ID" value="ENSDARG00000011055"/>
</dbReference>
<dbReference type="GeneID" id="325469"/>
<dbReference type="KEGG" id="dre:325469"/>
<dbReference type="AGR" id="ZFIN:ZDB-GENE-030131-4194"/>
<dbReference type="CTD" id="26268"/>
<dbReference type="ZFIN" id="ZDB-GENE-030131-4194">
    <property type="gene designation" value="fbxo9"/>
</dbReference>
<dbReference type="eggNOG" id="KOG2997">
    <property type="taxonomic scope" value="Eukaryota"/>
</dbReference>
<dbReference type="HOGENOM" id="CLU_041758_0_0_1"/>
<dbReference type="InParanoid" id="Q6P3K3"/>
<dbReference type="OMA" id="RWNRLDF"/>
<dbReference type="OrthoDB" id="2117972at2759"/>
<dbReference type="PhylomeDB" id="Q6P3K3"/>
<dbReference type="TreeFam" id="TF324797"/>
<dbReference type="Reactome" id="R-DRE-8951664">
    <property type="pathway name" value="Neddylation"/>
</dbReference>
<dbReference type="Reactome" id="R-DRE-983168">
    <property type="pathway name" value="Antigen processing: Ubiquitination &amp; Proteasome degradation"/>
</dbReference>
<dbReference type="UniPathway" id="UPA00143"/>
<dbReference type="PRO" id="PR:Q6P3K3"/>
<dbReference type="Proteomes" id="UP000000437">
    <property type="component" value="Chromosome 13"/>
</dbReference>
<dbReference type="Bgee" id="ENSDARG00000011055">
    <property type="expression patterns" value="Expressed in spleen and 37 other cell types or tissues"/>
</dbReference>
<dbReference type="ExpressionAtlas" id="Q6P3K3">
    <property type="expression patterns" value="baseline and differential"/>
</dbReference>
<dbReference type="GO" id="GO:0005737">
    <property type="term" value="C:cytoplasm"/>
    <property type="evidence" value="ECO:0000250"/>
    <property type="project" value="UniProtKB"/>
</dbReference>
<dbReference type="GO" id="GO:0019005">
    <property type="term" value="C:SCF ubiquitin ligase complex"/>
    <property type="evidence" value="ECO:0000250"/>
    <property type="project" value="UniProtKB"/>
</dbReference>
<dbReference type="GO" id="GO:0016567">
    <property type="term" value="P:protein ubiquitination"/>
    <property type="evidence" value="ECO:0000250"/>
    <property type="project" value="UniProtKB"/>
</dbReference>
<dbReference type="GO" id="GO:0032006">
    <property type="term" value="P:regulation of TOR signaling"/>
    <property type="evidence" value="ECO:0000250"/>
    <property type="project" value="UniProtKB"/>
</dbReference>
<dbReference type="GO" id="GO:0031146">
    <property type="term" value="P:SCF-dependent proteasomal ubiquitin-dependent protein catabolic process"/>
    <property type="evidence" value="ECO:0000250"/>
    <property type="project" value="UniProtKB"/>
</dbReference>
<dbReference type="CDD" id="cd22089">
    <property type="entry name" value="F-box_FBXO9"/>
    <property type="match status" value="1"/>
</dbReference>
<dbReference type="FunFam" id="1.20.1280.50:FF:000012">
    <property type="entry name" value="F-box only protein 9"/>
    <property type="match status" value="1"/>
</dbReference>
<dbReference type="Gene3D" id="1.20.1280.50">
    <property type="match status" value="1"/>
</dbReference>
<dbReference type="Gene3D" id="1.20.58.80">
    <property type="entry name" value="Phosphotransferase system, lactose/cellobiose-type IIA subunit"/>
    <property type="match status" value="1"/>
</dbReference>
<dbReference type="InterPro" id="IPR036047">
    <property type="entry name" value="F-box-like_dom_sf"/>
</dbReference>
<dbReference type="InterPro" id="IPR001810">
    <property type="entry name" value="F-box_dom"/>
</dbReference>
<dbReference type="InterPro" id="IPR045464">
    <property type="entry name" value="Hrt3/FBXO9_C"/>
</dbReference>
<dbReference type="InterPro" id="IPR036181">
    <property type="entry name" value="MIT_dom_sf"/>
</dbReference>
<dbReference type="PANTHER" id="PTHR12874">
    <property type="entry name" value="F-BOX ONLY PROTEIN 48-RELATED"/>
    <property type="match status" value="1"/>
</dbReference>
<dbReference type="PANTHER" id="PTHR12874:SF29">
    <property type="entry name" value="F-BOX ONLY PROTEIN 9"/>
    <property type="match status" value="1"/>
</dbReference>
<dbReference type="Pfam" id="PF12937">
    <property type="entry name" value="F-box-like"/>
    <property type="match status" value="1"/>
</dbReference>
<dbReference type="Pfam" id="PF19270">
    <property type="entry name" value="FBO_C"/>
    <property type="match status" value="1"/>
</dbReference>
<dbReference type="SUPFAM" id="SSF81383">
    <property type="entry name" value="F-box domain"/>
    <property type="match status" value="1"/>
</dbReference>
<dbReference type="SUPFAM" id="SSF116846">
    <property type="entry name" value="MIT domain"/>
    <property type="match status" value="1"/>
</dbReference>
<dbReference type="PROSITE" id="PS50181">
    <property type="entry name" value="FBOX"/>
    <property type="match status" value="1"/>
</dbReference>
<evidence type="ECO:0000250" key="1"/>
<evidence type="ECO:0000255" key="2">
    <source>
        <dbReference type="PROSITE-ProRule" id="PRU00080"/>
    </source>
</evidence>
<evidence type="ECO:0000256" key="3">
    <source>
        <dbReference type="SAM" id="MobiDB-lite"/>
    </source>
</evidence>
<evidence type="ECO:0000305" key="4"/>
<keyword id="KW-0963">Cytoplasm</keyword>
<keyword id="KW-1185">Reference proteome</keyword>
<keyword id="KW-0802">TPR repeat</keyword>
<keyword id="KW-0833">Ubl conjugation pathway</keyword>